<reference key="1">
    <citation type="journal article" date="2004" name="Proc. Natl. Acad. Sci. U.S.A.">
        <title>The diploid genome sequence of Candida albicans.</title>
        <authorList>
            <person name="Jones T."/>
            <person name="Federspiel N.A."/>
            <person name="Chibana H."/>
            <person name="Dungan J."/>
            <person name="Kalman S."/>
            <person name="Magee B.B."/>
            <person name="Newport G."/>
            <person name="Thorstenson Y.R."/>
            <person name="Agabian N."/>
            <person name="Magee P.T."/>
            <person name="Davis R.W."/>
            <person name="Scherer S."/>
        </authorList>
    </citation>
    <scope>NUCLEOTIDE SEQUENCE [LARGE SCALE GENOMIC DNA]</scope>
    <source>
        <strain>SC5314 / ATCC MYA-2876</strain>
    </source>
</reference>
<reference key="2">
    <citation type="journal article" date="2007" name="Genome Biol.">
        <title>Assembly of the Candida albicans genome into sixteen supercontigs aligned on the eight chromosomes.</title>
        <authorList>
            <person name="van het Hoog M."/>
            <person name="Rast T.J."/>
            <person name="Martchenko M."/>
            <person name="Grindle S."/>
            <person name="Dignard D."/>
            <person name="Hogues H."/>
            <person name="Cuomo C."/>
            <person name="Berriman M."/>
            <person name="Scherer S."/>
            <person name="Magee B.B."/>
            <person name="Whiteway M."/>
            <person name="Chibana H."/>
            <person name="Nantel A."/>
            <person name="Magee P.T."/>
        </authorList>
    </citation>
    <scope>GENOME REANNOTATION</scope>
    <source>
        <strain>SC5314 / ATCC MYA-2876</strain>
    </source>
</reference>
<reference key="3">
    <citation type="journal article" date="2013" name="Genome Biol.">
        <title>Assembly of a phased diploid Candida albicans genome facilitates allele-specific measurements and provides a simple model for repeat and indel structure.</title>
        <authorList>
            <person name="Muzzey D."/>
            <person name="Schwartz K."/>
            <person name="Weissman J.S."/>
            <person name="Sherlock G."/>
        </authorList>
    </citation>
    <scope>NUCLEOTIDE SEQUENCE [LARGE SCALE GENOMIC DNA]</scope>
    <scope>GENOME REANNOTATION</scope>
    <source>
        <strain>SC5314 / ATCC MYA-2876</strain>
    </source>
</reference>
<proteinExistence type="inferred from homology"/>
<comment type="function">
    <text evidence="1">Essential component of the TIM23 complex, a complex that mediates the translocation of transit peptide-containing proteins across the mitochondrial inner membrane. Required to keep the TOM and the TIM23 complexes in close contact. At some point, it is released from the TOM23 complex to allow protein translocation into the mitochondrial matrix (By similarity).</text>
</comment>
<comment type="subunit">
    <text evidence="1">Component of the TIM23 complex, at least composed of TIM23, TIM17, TIM50 and TIM21.</text>
</comment>
<comment type="subcellular location">
    <subcellularLocation>
        <location evidence="1">Mitochondrion inner membrane</location>
        <topology evidence="1">Single-pass membrane protein</topology>
    </subcellularLocation>
</comment>
<comment type="similarity">
    <text evidence="4">Belongs to the TIM21 family.</text>
</comment>
<name>TIM21_CANAL</name>
<dbReference type="EMBL" id="CP017623">
    <property type="protein sequence ID" value="AOW25919.1"/>
    <property type="molecule type" value="Genomic_DNA"/>
</dbReference>
<dbReference type="RefSeq" id="XP_713785.1">
    <property type="nucleotide sequence ID" value="XM_708692.1"/>
</dbReference>
<dbReference type="SMR" id="Q59VW7"/>
<dbReference type="FunCoup" id="Q59VW7">
    <property type="interactions" value="268"/>
</dbReference>
<dbReference type="STRING" id="237561.Q59VW7"/>
<dbReference type="EnsemblFungi" id="C1_02350W_A-T">
    <property type="protein sequence ID" value="C1_02350W_A-T-p1"/>
    <property type="gene ID" value="C1_02350W_A"/>
</dbReference>
<dbReference type="GeneID" id="3644573"/>
<dbReference type="KEGG" id="cal:CAALFM_C102350WA"/>
<dbReference type="CGD" id="CAL0000180033">
    <property type="gene designation" value="TIM21"/>
</dbReference>
<dbReference type="VEuPathDB" id="FungiDB:C1_02350W_A"/>
<dbReference type="eggNOG" id="KOG4836">
    <property type="taxonomic scope" value="Eukaryota"/>
</dbReference>
<dbReference type="HOGENOM" id="CLU_089043_0_0_1"/>
<dbReference type="InParanoid" id="Q59VW7"/>
<dbReference type="OMA" id="HVESKQK"/>
<dbReference type="OrthoDB" id="436405at2759"/>
<dbReference type="PRO" id="PR:Q59VW7"/>
<dbReference type="Proteomes" id="UP000000559">
    <property type="component" value="Chromosome 1"/>
</dbReference>
<dbReference type="GO" id="GO:0005886">
    <property type="term" value="C:plasma membrane"/>
    <property type="evidence" value="ECO:0000314"/>
    <property type="project" value="CGD"/>
</dbReference>
<dbReference type="GO" id="GO:0005744">
    <property type="term" value="C:TIM23 mitochondrial import inner membrane translocase complex"/>
    <property type="evidence" value="ECO:0000318"/>
    <property type="project" value="GO_Central"/>
</dbReference>
<dbReference type="GO" id="GO:0030150">
    <property type="term" value="P:protein import into mitochondrial matrix"/>
    <property type="evidence" value="ECO:0000318"/>
    <property type="project" value="GO_Central"/>
</dbReference>
<dbReference type="Gene3D" id="3.10.450.320">
    <property type="entry name" value="Mitochondrial import inner membrane translocase subunit Tim21"/>
    <property type="match status" value="1"/>
</dbReference>
<dbReference type="InterPro" id="IPR013261">
    <property type="entry name" value="Tim21"/>
</dbReference>
<dbReference type="InterPro" id="IPR038552">
    <property type="entry name" value="Tim21_IMS_sf"/>
</dbReference>
<dbReference type="PANTHER" id="PTHR13032">
    <property type="entry name" value="MITOCHONDRIAL IMPORT INNER MEMBRANE TRANSLOCASE SUBUNIT TIM21"/>
    <property type="match status" value="1"/>
</dbReference>
<dbReference type="PANTHER" id="PTHR13032:SF6">
    <property type="entry name" value="MITOCHONDRIAL IMPORT INNER MEMBRANE TRANSLOCASE SUBUNIT TIM21"/>
    <property type="match status" value="1"/>
</dbReference>
<dbReference type="Pfam" id="PF08294">
    <property type="entry name" value="TIM21"/>
    <property type="match status" value="1"/>
</dbReference>
<protein>
    <recommendedName>
        <fullName>Mitochondrial import inner membrane translocase subunit TIM21</fullName>
    </recommendedName>
</protein>
<keyword id="KW-0472">Membrane</keyword>
<keyword id="KW-0496">Mitochondrion</keyword>
<keyword id="KW-0999">Mitochondrion inner membrane</keyword>
<keyword id="KW-0653">Protein transport</keyword>
<keyword id="KW-1185">Reference proteome</keyword>
<keyword id="KW-0809">Transit peptide</keyword>
<keyword id="KW-0811">Translocation</keyword>
<keyword id="KW-0812">Transmembrane</keyword>
<keyword id="KW-1133">Transmembrane helix</keyword>
<keyword id="KW-0813">Transport</keyword>
<gene>
    <name type="primary">TIM21</name>
    <name type="synonym">FMP17</name>
    <name type="ordered locus">CAALFM_C102350WA</name>
    <name type="ORF">CaO19.11175</name>
    <name type="ORF">CaO19.3691</name>
</gene>
<organism>
    <name type="scientific">Candida albicans (strain SC5314 / ATCC MYA-2876)</name>
    <name type="common">Yeast</name>
    <dbReference type="NCBI Taxonomy" id="237561"/>
    <lineage>
        <taxon>Eukaryota</taxon>
        <taxon>Fungi</taxon>
        <taxon>Dikarya</taxon>
        <taxon>Ascomycota</taxon>
        <taxon>Saccharomycotina</taxon>
        <taxon>Pichiomycetes</taxon>
        <taxon>Debaryomycetaceae</taxon>
        <taxon>Candida/Lodderomyces clade</taxon>
        <taxon>Candida</taxon>
    </lineage>
</organism>
<sequence length="268" mass="30085">MHMIQRVSSIGLRTLRSSNIGSIRSLIVLPILSIKPTYIRQTQAQINLKPQALLLNLLLHHHHHHHHYYSTKTAPPPPPPPQPPQDKNAKGKKILNRINRAFTFSLSTLLVVGAAGISVLVVSLILSELFLPSGDTRTFNKAVKLIEKNEQAQKALNFQSGQRLKAYGIVSADKWVRNRPVQSVKTKRKDGKDHLIMKFQVESDNGKYGVVSLEQIDNSMWNTEFEYISLDVPGFKRIYIIEPPKNQLIPKIGGGSGFLGLNWGPKKD</sequence>
<feature type="transit peptide" description="Mitochondrion" evidence="2">
    <location>
        <begin position="1"/>
        <end status="unknown"/>
    </location>
</feature>
<feature type="chain" id="PRO_0000043142" description="Mitochondrial import inner membrane translocase subunit TIM21">
    <location>
        <begin status="unknown"/>
        <end position="268"/>
    </location>
</feature>
<feature type="topological domain" description="Mitochondrial matrix" evidence="2">
    <location>
        <begin status="unknown"/>
        <end position="105"/>
    </location>
</feature>
<feature type="transmembrane region" description="Helical" evidence="2">
    <location>
        <begin position="106"/>
        <end position="126"/>
    </location>
</feature>
<feature type="topological domain" description="Mitochondrial intermembrane" evidence="2">
    <location>
        <begin position="127"/>
        <end position="268"/>
    </location>
</feature>
<feature type="region of interest" description="Disordered" evidence="3">
    <location>
        <begin position="66"/>
        <end position="89"/>
    </location>
</feature>
<feature type="compositionally biased region" description="Pro residues" evidence="3">
    <location>
        <begin position="74"/>
        <end position="84"/>
    </location>
</feature>
<accession>Q59VW7</accession>
<accession>A0A1D8PCR1</accession>
<evidence type="ECO:0000250" key="1"/>
<evidence type="ECO:0000255" key="2"/>
<evidence type="ECO:0000256" key="3">
    <source>
        <dbReference type="SAM" id="MobiDB-lite"/>
    </source>
</evidence>
<evidence type="ECO:0000305" key="4"/>